<reference key="1">
    <citation type="journal article" date="2009" name="PLoS ONE">
        <title>Non mycobacterial virulence genes in the genome of the emerging pathogen Mycobacterium abscessus.</title>
        <authorList>
            <person name="Ripoll F."/>
            <person name="Pasek S."/>
            <person name="Schenowitz C."/>
            <person name="Dossat C."/>
            <person name="Barbe V."/>
            <person name="Rottman M."/>
            <person name="Macheras E."/>
            <person name="Heym B."/>
            <person name="Herrmann J.L."/>
            <person name="Daffe M."/>
            <person name="Brosch R."/>
            <person name="Risler J.L."/>
            <person name="Gaillard J.L."/>
        </authorList>
    </citation>
    <scope>NUCLEOTIDE SEQUENCE [LARGE SCALE GENOMIC DNA]</scope>
    <source>
        <strain>ATCC 19977 / DSM 44196 / CCUG 20993 / CIP 104536 / JCM 13569 / NCTC 13031 / TMC 1543 / L948</strain>
    </source>
</reference>
<name>HOA1_MYCA9</name>
<accession>B1MH40</accession>
<organism>
    <name type="scientific">Mycobacteroides abscessus (strain ATCC 19977 / DSM 44196 / CCUG 20993 / CIP 104536 / JCM 13569 / NCTC 13031 / TMC 1543 / L948)</name>
    <name type="common">Mycobacterium abscessus</name>
    <dbReference type="NCBI Taxonomy" id="561007"/>
    <lineage>
        <taxon>Bacteria</taxon>
        <taxon>Bacillati</taxon>
        <taxon>Actinomycetota</taxon>
        <taxon>Actinomycetes</taxon>
        <taxon>Mycobacteriales</taxon>
        <taxon>Mycobacteriaceae</taxon>
        <taxon>Mycobacteroides</taxon>
        <taxon>Mycobacteroides abscessus</taxon>
    </lineage>
</organism>
<protein>
    <recommendedName>
        <fullName evidence="1">4-hydroxy-2-oxovalerate aldolase 1</fullName>
        <shortName evidence="1">HOA 1</shortName>
        <ecNumber evidence="1">4.1.3.39</ecNumber>
    </recommendedName>
    <alternativeName>
        <fullName evidence="1">4-hydroxy-2-keto-pentanoic acid aldolase 1</fullName>
    </alternativeName>
    <alternativeName>
        <fullName evidence="1">4-hydroxy-2-oxopentanoate aldolase 1</fullName>
    </alternativeName>
</protein>
<feature type="chain" id="PRO_0000387844" description="4-hydroxy-2-oxovalerate aldolase 1">
    <location>
        <begin position="1"/>
        <end position="359"/>
    </location>
</feature>
<feature type="domain" description="Pyruvate carboxyltransferase" evidence="1">
    <location>
        <begin position="23"/>
        <end position="275"/>
    </location>
</feature>
<feature type="active site" description="Proton acceptor" evidence="1">
    <location>
        <position position="35"/>
    </location>
</feature>
<feature type="binding site" evidence="1">
    <location>
        <begin position="31"/>
        <end position="32"/>
    </location>
    <ligand>
        <name>substrate</name>
    </ligand>
</feature>
<feature type="binding site" evidence="1">
    <location>
        <position position="32"/>
    </location>
    <ligand>
        <name>Mn(2+)</name>
        <dbReference type="ChEBI" id="CHEBI:29035"/>
    </ligand>
</feature>
<feature type="binding site" evidence="1">
    <location>
        <position position="185"/>
    </location>
    <ligand>
        <name>substrate</name>
    </ligand>
</feature>
<feature type="binding site" evidence="1">
    <location>
        <position position="214"/>
    </location>
    <ligand>
        <name>Mn(2+)</name>
        <dbReference type="ChEBI" id="CHEBI:29035"/>
    </ligand>
</feature>
<feature type="binding site" evidence="1">
    <location>
        <position position="214"/>
    </location>
    <ligand>
        <name>substrate</name>
    </ligand>
</feature>
<feature type="binding site" evidence="1">
    <location>
        <position position="216"/>
    </location>
    <ligand>
        <name>Mn(2+)</name>
        <dbReference type="ChEBI" id="CHEBI:29035"/>
    </ligand>
</feature>
<feature type="binding site" evidence="1">
    <location>
        <position position="305"/>
    </location>
    <ligand>
        <name>substrate</name>
    </ligand>
</feature>
<feature type="site" description="Transition state stabilizer" evidence="1">
    <location>
        <position position="31"/>
    </location>
</feature>
<gene>
    <name type="ordered locus">MAB_0626</name>
</gene>
<dbReference type="EC" id="4.1.3.39" evidence="1"/>
<dbReference type="EMBL" id="CU458896">
    <property type="protein sequence ID" value="CAM60724.1"/>
    <property type="molecule type" value="Genomic_DNA"/>
</dbReference>
<dbReference type="SMR" id="B1MH40"/>
<dbReference type="GeneID" id="93377572"/>
<dbReference type="KEGG" id="mab:MAB_0626"/>
<dbReference type="Proteomes" id="UP000007137">
    <property type="component" value="Chromosome"/>
</dbReference>
<dbReference type="GO" id="GO:0003852">
    <property type="term" value="F:2-isopropylmalate synthase activity"/>
    <property type="evidence" value="ECO:0007669"/>
    <property type="project" value="TreeGrafter"/>
</dbReference>
<dbReference type="GO" id="GO:0008701">
    <property type="term" value="F:4-hydroxy-2-oxovalerate aldolase activity"/>
    <property type="evidence" value="ECO:0007669"/>
    <property type="project" value="UniProtKB-UniRule"/>
</dbReference>
<dbReference type="GO" id="GO:0030145">
    <property type="term" value="F:manganese ion binding"/>
    <property type="evidence" value="ECO:0007669"/>
    <property type="project" value="UniProtKB-UniRule"/>
</dbReference>
<dbReference type="GO" id="GO:0009056">
    <property type="term" value="P:catabolic process"/>
    <property type="evidence" value="ECO:0007669"/>
    <property type="project" value="UniProtKB-KW"/>
</dbReference>
<dbReference type="GO" id="GO:0009098">
    <property type="term" value="P:L-leucine biosynthetic process"/>
    <property type="evidence" value="ECO:0007669"/>
    <property type="project" value="TreeGrafter"/>
</dbReference>
<dbReference type="CDD" id="cd07943">
    <property type="entry name" value="DRE_TIM_HOA"/>
    <property type="match status" value="1"/>
</dbReference>
<dbReference type="Gene3D" id="1.10.8.60">
    <property type="match status" value="1"/>
</dbReference>
<dbReference type="Gene3D" id="3.20.20.70">
    <property type="entry name" value="Aldolase class I"/>
    <property type="match status" value="1"/>
</dbReference>
<dbReference type="HAMAP" id="MF_01656">
    <property type="entry name" value="HOA"/>
    <property type="match status" value="1"/>
</dbReference>
<dbReference type="InterPro" id="IPR050073">
    <property type="entry name" value="2-IPM_HCS-like"/>
</dbReference>
<dbReference type="InterPro" id="IPR017629">
    <property type="entry name" value="4OH_2_O-val_aldolase"/>
</dbReference>
<dbReference type="InterPro" id="IPR013785">
    <property type="entry name" value="Aldolase_TIM"/>
</dbReference>
<dbReference type="InterPro" id="IPR012425">
    <property type="entry name" value="DmpG_comm"/>
</dbReference>
<dbReference type="InterPro" id="IPR035685">
    <property type="entry name" value="DRE_TIM_HOA"/>
</dbReference>
<dbReference type="InterPro" id="IPR000891">
    <property type="entry name" value="PYR_CT"/>
</dbReference>
<dbReference type="NCBIfam" id="TIGR03217">
    <property type="entry name" value="4OH_2_O_val_ald"/>
    <property type="match status" value="1"/>
</dbReference>
<dbReference type="NCBIfam" id="NF006049">
    <property type="entry name" value="PRK08195.1"/>
    <property type="match status" value="1"/>
</dbReference>
<dbReference type="PANTHER" id="PTHR10277:SF9">
    <property type="entry name" value="2-ISOPROPYLMALATE SYNTHASE 1, CHLOROPLASTIC-RELATED"/>
    <property type="match status" value="1"/>
</dbReference>
<dbReference type="PANTHER" id="PTHR10277">
    <property type="entry name" value="HOMOCITRATE SYNTHASE-RELATED"/>
    <property type="match status" value="1"/>
</dbReference>
<dbReference type="Pfam" id="PF07836">
    <property type="entry name" value="DmpG_comm"/>
    <property type="match status" value="1"/>
</dbReference>
<dbReference type="Pfam" id="PF00682">
    <property type="entry name" value="HMGL-like"/>
    <property type="match status" value="1"/>
</dbReference>
<dbReference type="SUPFAM" id="SSF51569">
    <property type="entry name" value="Aldolase"/>
    <property type="match status" value="1"/>
</dbReference>
<dbReference type="SUPFAM" id="SSF89000">
    <property type="entry name" value="post-HMGL domain-like"/>
    <property type="match status" value="1"/>
</dbReference>
<dbReference type="PROSITE" id="PS50991">
    <property type="entry name" value="PYR_CT"/>
    <property type="match status" value="1"/>
</dbReference>
<keyword id="KW-0058">Aromatic hydrocarbons catabolism</keyword>
<keyword id="KW-0456">Lyase</keyword>
<keyword id="KW-0464">Manganese</keyword>
<keyword id="KW-0479">Metal-binding</keyword>
<keyword id="KW-1185">Reference proteome</keyword>
<proteinExistence type="inferred from homology"/>
<sequence>MGSDTSTQLLGTDGIFFDAAWDVRVTDTSLRDGSHHKRHQFTADEVRAIVAALDGAGVPVIEVTHGDGLGGSSFNYGFSKTPEQELIKLAAQTATNAKIAFLMLPGVGTKEDIIEAQGNGGSICRIATHCTEADVSIQHFGLARERGLETVGFLMMSHTISPEKLAKQARIMADAGCQCVYVVDSAGALVLDGVADRVAAVVAELGSDAQVGFHGHENLGLGVANSIEAVRAGAKQIDGSTRRFGAGAGNAPVEALIGVFDKIGVKTGIDFFDIADAAEEVVAPAMPAECLLDRNALIMGYSGVYSSFLKHAIRQGERYGVPAHQLLHRAGERKLIGGQEDQLIDIALEIQRENAANGQ</sequence>
<evidence type="ECO:0000255" key="1">
    <source>
        <dbReference type="HAMAP-Rule" id="MF_01656"/>
    </source>
</evidence>
<comment type="catalytic activity">
    <reaction evidence="1">
        <text>(S)-4-hydroxy-2-oxopentanoate = acetaldehyde + pyruvate</text>
        <dbReference type="Rhea" id="RHEA:22624"/>
        <dbReference type="ChEBI" id="CHEBI:15343"/>
        <dbReference type="ChEBI" id="CHEBI:15361"/>
        <dbReference type="ChEBI" id="CHEBI:73143"/>
        <dbReference type="EC" id="4.1.3.39"/>
    </reaction>
</comment>
<comment type="similarity">
    <text evidence="1">Belongs to the 4-hydroxy-2-oxovalerate aldolase family.</text>
</comment>